<accession>A9BJQ0</accession>
<keyword id="KW-0119">Carbohydrate metabolism</keyword>
<keyword id="KW-0963">Cytoplasm</keyword>
<keyword id="KW-0413">Isomerase</keyword>
<comment type="function">
    <text evidence="1">Catalyzes the interconversion of beta-pyran and beta-furan forms of D-ribose.</text>
</comment>
<comment type="catalytic activity">
    <reaction evidence="1">
        <text>beta-D-ribopyranose = beta-D-ribofuranose</text>
        <dbReference type="Rhea" id="RHEA:25432"/>
        <dbReference type="ChEBI" id="CHEBI:27476"/>
        <dbReference type="ChEBI" id="CHEBI:47002"/>
        <dbReference type="EC" id="5.4.99.62"/>
    </reaction>
</comment>
<comment type="pathway">
    <text evidence="1">Carbohydrate metabolism; D-ribose degradation; D-ribose 5-phosphate from beta-D-ribopyranose: step 1/2.</text>
</comment>
<comment type="subunit">
    <text evidence="1">Homodecamer.</text>
</comment>
<comment type="subcellular location">
    <subcellularLocation>
        <location evidence="1">Cytoplasm</location>
    </subcellularLocation>
</comment>
<comment type="similarity">
    <text evidence="1">Belongs to the RbsD / FucU family. RbsD subfamily.</text>
</comment>
<proteinExistence type="inferred from homology"/>
<feature type="chain" id="PRO_0000346230" description="D-ribose pyranase">
    <location>
        <begin position="1"/>
        <end position="131"/>
    </location>
</feature>
<feature type="active site" description="Proton donor" evidence="1">
    <location>
        <position position="20"/>
    </location>
</feature>
<feature type="binding site" evidence="1">
    <location>
        <position position="28"/>
    </location>
    <ligand>
        <name>substrate</name>
    </ligand>
</feature>
<feature type="binding site" evidence="1">
    <location>
        <position position="98"/>
    </location>
    <ligand>
        <name>substrate</name>
    </ligand>
</feature>
<feature type="binding site" evidence="1">
    <location>
        <begin position="120"/>
        <end position="122"/>
    </location>
    <ligand>
        <name>substrate</name>
    </ligand>
</feature>
<organism>
    <name type="scientific">Petrotoga mobilis (strain DSM 10674 / SJ95)</name>
    <dbReference type="NCBI Taxonomy" id="403833"/>
    <lineage>
        <taxon>Bacteria</taxon>
        <taxon>Thermotogati</taxon>
        <taxon>Thermotogota</taxon>
        <taxon>Thermotogae</taxon>
        <taxon>Petrotogales</taxon>
        <taxon>Petrotogaceae</taxon>
        <taxon>Petrotoga</taxon>
    </lineage>
</organism>
<reference key="1">
    <citation type="submission" date="2007-11" db="EMBL/GenBank/DDBJ databases">
        <title>Complete sequence of Petroga mobilis SJ95.</title>
        <authorList>
            <consortium name="US DOE Joint Genome Institute"/>
            <person name="Copeland A."/>
            <person name="Lucas S."/>
            <person name="Lapidus A."/>
            <person name="Barry K."/>
            <person name="Glavina del Rio T."/>
            <person name="Dalin E."/>
            <person name="Tice H."/>
            <person name="Pitluck S."/>
            <person name="Meincke L."/>
            <person name="Brettin T."/>
            <person name="Bruce D."/>
            <person name="Detter J.C."/>
            <person name="Han C."/>
            <person name="Kuske C.R."/>
            <person name="Schmutz J."/>
            <person name="Larimer F."/>
            <person name="Land M."/>
            <person name="Hauser L."/>
            <person name="Kyrpides N."/>
            <person name="Mikhailova N."/>
            <person name="Noll K."/>
            <person name="Richardson P."/>
        </authorList>
    </citation>
    <scope>NUCLEOTIDE SEQUENCE [LARGE SCALE GENOMIC DNA]</scope>
    <source>
        <strain>DSM 10674 / SJ95</strain>
    </source>
</reference>
<protein>
    <recommendedName>
        <fullName evidence="1">D-ribose pyranase</fullName>
        <ecNumber evidence="1">5.4.99.62</ecNumber>
    </recommendedName>
</protein>
<sequence length="131" mass="14981">MKKQGIFNSQISYFVASMGHKDMLSIVDMGYPIPKDATFVDLVFDKGIPNFIDTIKMVLYELEVEKVIIAGEMEVNNLKNYQKVIDIFSNIEIEKKSHEEFKDIAKNSKFFIRTGECTPFSNIILVSGVIF</sequence>
<dbReference type="EC" id="5.4.99.62" evidence="1"/>
<dbReference type="EMBL" id="CP000879">
    <property type="protein sequence ID" value="ABX31643.1"/>
    <property type="molecule type" value="Genomic_DNA"/>
</dbReference>
<dbReference type="RefSeq" id="WP_012208746.1">
    <property type="nucleotide sequence ID" value="NC_010003.1"/>
</dbReference>
<dbReference type="SMR" id="A9BJQ0"/>
<dbReference type="STRING" id="403833.Pmob_0920"/>
<dbReference type="KEGG" id="pmo:Pmob_0920"/>
<dbReference type="eggNOG" id="COG1869">
    <property type="taxonomic scope" value="Bacteria"/>
</dbReference>
<dbReference type="HOGENOM" id="CLU_135498_0_0_0"/>
<dbReference type="OrthoDB" id="9805009at2"/>
<dbReference type="UniPathway" id="UPA00916">
    <property type="reaction ID" value="UER00888"/>
</dbReference>
<dbReference type="Proteomes" id="UP000000789">
    <property type="component" value="Chromosome"/>
</dbReference>
<dbReference type="GO" id="GO:0005829">
    <property type="term" value="C:cytosol"/>
    <property type="evidence" value="ECO:0007669"/>
    <property type="project" value="TreeGrafter"/>
</dbReference>
<dbReference type="GO" id="GO:0062193">
    <property type="term" value="F:D-ribose pyranase activity"/>
    <property type="evidence" value="ECO:0007669"/>
    <property type="project" value="UniProtKB-EC"/>
</dbReference>
<dbReference type="GO" id="GO:0016872">
    <property type="term" value="F:intramolecular lyase activity"/>
    <property type="evidence" value="ECO:0007669"/>
    <property type="project" value="UniProtKB-UniRule"/>
</dbReference>
<dbReference type="GO" id="GO:0048029">
    <property type="term" value="F:monosaccharide binding"/>
    <property type="evidence" value="ECO:0007669"/>
    <property type="project" value="InterPro"/>
</dbReference>
<dbReference type="GO" id="GO:0019303">
    <property type="term" value="P:D-ribose catabolic process"/>
    <property type="evidence" value="ECO:0007669"/>
    <property type="project" value="UniProtKB-UniRule"/>
</dbReference>
<dbReference type="Gene3D" id="3.40.1650.10">
    <property type="entry name" value="RbsD-like domain"/>
    <property type="match status" value="1"/>
</dbReference>
<dbReference type="HAMAP" id="MF_01661">
    <property type="entry name" value="D_rib_pyranase"/>
    <property type="match status" value="1"/>
</dbReference>
<dbReference type="InterPro" id="IPR023064">
    <property type="entry name" value="D-ribose_pyranase"/>
</dbReference>
<dbReference type="InterPro" id="IPR023750">
    <property type="entry name" value="RbsD-like_sf"/>
</dbReference>
<dbReference type="InterPro" id="IPR007721">
    <property type="entry name" value="RbsD_FucU"/>
</dbReference>
<dbReference type="NCBIfam" id="NF008761">
    <property type="entry name" value="PRK11797.1"/>
    <property type="match status" value="1"/>
</dbReference>
<dbReference type="PANTHER" id="PTHR37831">
    <property type="entry name" value="D-RIBOSE PYRANASE"/>
    <property type="match status" value="1"/>
</dbReference>
<dbReference type="PANTHER" id="PTHR37831:SF1">
    <property type="entry name" value="D-RIBOSE PYRANASE"/>
    <property type="match status" value="1"/>
</dbReference>
<dbReference type="Pfam" id="PF05025">
    <property type="entry name" value="RbsD_FucU"/>
    <property type="match status" value="1"/>
</dbReference>
<dbReference type="SUPFAM" id="SSF102546">
    <property type="entry name" value="RbsD-like"/>
    <property type="match status" value="1"/>
</dbReference>
<evidence type="ECO:0000255" key="1">
    <source>
        <dbReference type="HAMAP-Rule" id="MF_01661"/>
    </source>
</evidence>
<gene>
    <name evidence="1" type="primary">rbsD</name>
    <name type="ordered locus">Pmob_0920</name>
</gene>
<name>RBSD_PETMO</name>